<protein>
    <recommendedName>
        <fullName evidence="20">Metabotropic glycine receptor</fullName>
        <shortName evidence="20">mGlyR</shortName>
    </recommendedName>
    <alternativeName>
        <fullName evidence="21">G-protein coupled receptor 158</fullName>
    </alternativeName>
</protein>
<keyword id="KW-1003">Cell membrane</keyword>
<keyword id="KW-0966">Cell projection</keyword>
<keyword id="KW-1015">Disulfide bond</keyword>
<keyword id="KW-0297">G-protein coupled receptor</keyword>
<keyword id="KW-0325">Glycoprotein</keyword>
<keyword id="KW-1017">Isopeptide bond</keyword>
<keyword id="KW-0472">Membrane</keyword>
<keyword id="KW-0539">Nucleus</keyword>
<keyword id="KW-0597">Phosphoprotein</keyword>
<keyword id="KW-0628">Postsynaptic cell membrane</keyword>
<keyword id="KW-0675">Receptor</keyword>
<keyword id="KW-1185">Reference proteome</keyword>
<keyword id="KW-0677">Repeat</keyword>
<keyword id="KW-0732">Signal</keyword>
<keyword id="KW-0770">Synapse</keyword>
<keyword id="KW-0807">Transducer</keyword>
<keyword id="KW-0812">Transmembrane</keyword>
<keyword id="KW-1133">Transmembrane helix</keyword>
<keyword id="KW-0832">Ubl conjugation</keyword>
<sequence length="1200" mass="134426">MGAMAYSLLFCLLLAHLGLGEVGASLDPPGRPDSPRERTPRGKQHGQQLPRASAPDPSIPWSRSTDGTILAQKLAEEVPVDVASYLYTGDFHQLKRANCSGRYELAGLPGKSPSLASSHPSLHGALDTLTHATNFLNMMLQSNKSREQTVQDDLQWYQALVRSLLEGEPSISRAAITFSTESLSTPAPQVFLQATREESRILLQDLSSSAHHLANATLETEWFHGLRRKWRPHLHRRGSNQGPRGLGHSWRRRDGLGGDRSHVKWSPPYLECENGSYKPGWLVTLSAAFYGLQPNLVPEFRGVMKVDISLQKVDIDQCSSDGWFSGTHKCHLNNSECMPIKGLGFVLGAYQCICKAGFYHPRVFSVNNFQRRGPDHHFSGSTKDVSEETHVCLPCREGCPFCADDRPCFVQEDKYLRLAIISFQALCMLLDFVSMLVVYHFRKAKSIRASGLILLETILFGSLLLYFPVVILYFEPSTFRCILLRWARLLGFATVYGTVTLKLHRVLKVFLSRTAQRIPYMTGGRVMRMLAVIVLVVFWFLVGWTSSMCQNLERDILLVGQGQTSDHLTFNMCLIDRWDYMTAVAEFLFLLWGIYLCYAVRTVPSAFHEPRYMAVAVHNELIITAIFHTIRFVLASRLQPDWMLMLYFAHAHLTVTVTIGLLLIPKFSHSSNNPRDDIATEAYEDELDMGRSGSYLNSSINSAWSEHSLDPEDIRDELKKLYAQLEIYKRKKMITNNPHLQKKRCSKKGLGRSIMRRITEIPETVSRQCSKEDKEGTDHSAAKGTGLVRKNPTESSGNTGRPKEESLKNRVFSLKKSHSTYDHVRDQTVESSSLPMESQEEEATENSTLESLSSKKLTQKLKEDSEAESTESVPLVCKSASAHNLSSEKKPGHPRTSMLQKSLSVIASAKEKTLGLAGKTQTLVMEDRAKSQKPKDRETIRKYSNSDNVETIPNSGHMEEPRKPQKSGIMKQQRVSLPTANPDVSSGITQIKDNFDIGEVCPWEVYDLTPGPMPSEPKAQKHVSIAASEVEQNPASFLKEKSYHKSKATEGLYQANHKSIDKTEVCPWEIHSQSLLEDENRLISKTPVLPGRAREENGSQLYTTNMCAGQYEELPHKVVAPKVENENLNQMGDQEKQTSSSVDIIPGSCNSSNNSHQPLTSRAEVCPWEFEPLEQPNAERSVTLPASSALSANKIPGPQK</sequence>
<reference key="1">
    <citation type="journal article" date="2009" name="PLoS Biol.">
        <title>Lineage-specific biology revealed by a finished genome assembly of the mouse.</title>
        <authorList>
            <person name="Church D.M."/>
            <person name="Goodstadt L."/>
            <person name="Hillier L.W."/>
            <person name="Zody M.C."/>
            <person name="Goldstein S."/>
            <person name="She X."/>
            <person name="Bult C.J."/>
            <person name="Agarwala R."/>
            <person name="Cherry J.L."/>
            <person name="DiCuccio M."/>
            <person name="Hlavina W."/>
            <person name="Kapustin Y."/>
            <person name="Meric P."/>
            <person name="Maglott D."/>
            <person name="Birtle Z."/>
            <person name="Marques A.C."/>
            <person name="Graves T."/>
            <person name="Zhou S."/>
            <person name="Teague B."/>
            <person name="Potamousis K."/>
            <person name="Churas C."/>
            <person name="Place M."/>
            <person name="Herschleb J."/>
            <person name="Runnheim R."/>
            <person name="Forrest D."/>
            <person name="Amos-Landgraf J."/>
            <person name="Schwartz D.C."/>
            <person name="Cheng Z."/>
            <person name="Lindblad-Toh K."/>
            <person name="Eichler E.E."/>
            <person name="Ponting C.P."/>
        </authorList>
    </citation>
    <scope>NUCLEOTIDE SEQUENCE [LARGE SCALE GENOMIC DNA]</scope>
    <source>
        <strain>C57BL/6J</strain>
    </source>
</reference>
<reference key="2">
    <citation type="journal article" date="2005" name="Science">
        <title>The transcriptional landscape of the mammalian genome.</title>
        <authorList>
            <person name="Carninci P."/>
            <person name="Kasukawa T."/>
            <person name="Katayama S."/>
            <person name="Gough J."/>
            <person name="Frith M.C."/>
            <person name="Maeda N."/>
            <person name="Oyama R."/>
            <person name="Ravasi T."/>
            <person name="Lenhard B."/>
            <person name="Wells C."/>
            <person name="Kodzius R."/>
            <person name="Shimokawa K."/>
            <person name="Bajic V.B."/>
            <person name="Brenner S.E."/>
            <person name="Batalov S."/>
            <person name="Forrest A.R."/>
            <person name="Zavolan M."/>
            <person name="Davis M.J."/>
            <person name="Wilming L.G."/>
            <person name="Aidinis V."/>
            <person name="Allen J.E."/>
            <person name="Ambesi-Impiombato A."/>
            <person name="Apweiler R."/>
            <person name="Aturaliya R.N."/>
            <person name="Bailey T.L."/>
            <person name="Bansal M."/>
            <person name="Baxter L."/>
            <person name="Beisel K.W."/>
            <person name="Bersano T."/>
            <person name="Bono H."/>
            <person name="Chalk A.M."/>
            <person name="Chiu K.P."/>
            <person name="Choudhary V."/>
            <person name="Christoffels A."/>
            <person name="Clutterbuck D.R."/>
            <person name="Crowe M.L."/>
            <person name="Dalla E."/>
            <person name="Dalrymple B.P."/>
            <person name="de Bono B."/>
            <person name="Della Gatta G."/>
            <person name="di Bernardo D."/>
            <person name="Down T."/>
            <person name="Engstrom P."/>
            <person name="Fagiolini M."/>
            <person name="Faulkner G."/>
            <person name="Fletcher C.F."/>
            <person name="Fukushima T."/>
            <person name="Furuno M."/>
            <person name="Futaki S."/>
            <person name="Gariboldi M."/>
            <person name="Georgii-Hemming P."/>
            <person name="Gingeras T.R."/>
            <person name="Gojobori T."/>
            <person name="Green R.E."/>
            <person name="Gustincich S."/>
            <person name="Harbers M."/>
            <person name="Hayashi Y."/>
            <person name="Hensch T.K."/>
            <person name="Hirokawa N."/>
            <person name="Hill D."/>
            <person name="Huminiecki L."/>
            <person name="Iacono M."/>
            <person name="Ikeo K."/>
            <person name="Iwama A."/>
            <person name="Ishikawa T."/>
            <person name="Jakt M."/>
            <person name="Kanapin A."/>
            <person name="Katoh M."/>
            <person name="Kawasawa Y."/>
            <person name="Kelso J."/>
            <person name="Kitamura H."/>
            <person name="Kitano H."/>
            <person name="Kollias G."/>
            <person name="Krishnan S.P."/>
            <person name="Kruger A."/>
            <person name="Kummerfeld S.K."/>
            <person name="Kurochkin I.V."/>
            <person name="Lareau L.F."/>
            <person name="Lazarevic D."/>
            <person name="Lipovich L."/>
            <person name="Liu J."/>
            <person name="Liuni S."/>
            <person name="McWilliam S."/>
            <person name="Madan Babu M."/>
            <person name="Madera M."/>
            <person name="Marchionni L."/>
            <person name="Matsuda H."/>
            <person name="Matsuzawa S."/>
            <person name="Miki H."/>
            <person name="Mignone F."/>
            <person name="Miyake S."/>
            <person name="Morris K."/>
            <person name="Mottagui-Tabar S."/>
            <person name="Mulder N."/>
            <person name="Nakano N."/>
            <person name="Nakauchi H."/>
            <person name="Ng P."/>
            <person name="Nilsson R."/>
            <person name="Nishiguchi S."/>
            <person name="Nishikawa S."/>
            <person name="Nori F."/>
            <person name="Ohara O."/>
            <person name="Okazaki Y."/>
            <person name="Orlando V."/>
            <person name="Pang K.C."/>
            <person name="Pavan W.J."/>
            <person name="Pavesi G."/>
            <person name="Pesole G."/>
            <person name="Petrovsky N."/>
            <person name="Piazza S."/>
            <person name="Reed J."/>
            <person name="Reid J.F."/>
            <person name="Ring B.Z."/>
            <person name="Ringwald M."/>
            <person name="Rost B."/>
            <person name="Ruan Y."/>
            <person name="Salzberg S.L."/>
            <person name="Sandelin A."/>
            <person name="Schneider C."/>
            <person name="Schoenbach C."/>
            <person name="Sekiguchi K."/>
            <person name="Semple C.A."/>
            <person name="Seno S."/>
            <person name="Sessa L."/>
            <person name="Sheng Y."/>
            <person name="Shibata Y."/>
            <person name="Shimada H."/>
            <person name="Shimada K."/>
            <person name="Silva D."/>
            <person name="Sinclair B."/>
            <person name="Sperling S."/>
            <person name="Stupka E."/>
            <person name="Sugiura K."/>
            <person name="Sultana R."/>
            <person name="Takenaka Y."/>
            <person name="Taki K."/>
            <person name="Tammoja K."/>
            <person name="Tan S.L."/>
            <person name="Tang S."/>
            <person name="Taylor M.S."/>
            <person name="Tegner J."/>
            <person name="Teichmann S.A."/>
            <person name="Ueda H.R."/>
            <person name="van Nimwegen E."/>
            <person name="Verardo R."/>
            <person name="Wei C.L."/>
            <person name="Yagi K."/>
            <person name="Yamanishi H."/>
            <person name="Zabarovsky E."/>
            <person name="Zhu S."/>
            <person name="Zimmer A."/>
            <person name="Hide W."/>
            <person name="Bult C."/>
            <person name="Grimmond S.M."/>
            <person name="Teasdale R.D."/>
            <person name="Liu E.T."/>
            <person name="Brusic V."/>
            <person name="Quackenbush J."/>
            <person name="Wahlestedt C."/>
            <person name="Mattick J.S."/>
            <person name="Hume D.A."/>
            <person name="Kai C."/>
            <person name="Sasaki D."/>
            <person name="Tomaru Y."/>
            <person name="Fukuda S."/>
            <person name="Kanamori-Katayama M."/>
            <person name="Suzuki M."/>
            <person name="Aoki J."/>
            <person name="Arakawa T."/>
            <person name="Iida J."/>
            <person name="Imamura K."/>
            <person name="Itoh M."/>
            <person name="Kato T."/>
            <person name="Kawaji H."/>
            <person name="Kawagashira N."/>
            <person name="Kawashima T."/>
            <person name="Kojima M."/>
            <person name="Kondo S."/>
            <person name="Konno H."/>
            <person name="Nakano K."/>
            <person name="Ninomiya N."/>
            <person name="Nishio T."/>
            <person name="Okada M."/>
            <person name="Plessy C."/>
            <person name="Shibata K."/>
            <person name="Shiraki T."/>
            <person name="Suzuki S."/>
            <person name="Tagami M."/>
            <person name="Waki K."/>
            <person name="Watahiki A."/>
            <person name="Okamura-Oho Y."/>
            <person name="Suzuki H."/>
            <person name="Kawai J."/>
            <person name="Hayashizaki Y."/>
        </authorList>
    </citation>
    <scope>NUCLEOTIDE SEQUENCE [LARGE SCALE MRNA] OF 1-724</scope>
    <source>
        <strain>C57BL/6J</strain>
        <tissue>Hippocampus</tissue>
    </source>
</reference>
<reference key="3">
    <citation type="journal article" date="2002" name="DNA Res.">
        <title>Prediction of the coding sequences of mouse homologues of KIAA gene: I. The complete nucleotide sequences of 100 mouse KIAA-homologous cDNAs identified by screening of terminal sequences of cDNA clones randomly sampled from size-fractionated libraries.</title>
        <authorList>
            <person name="Okazaki N."/>
            <person name="Kikuno R."/>
            <person name="Ohara R."/>
            <person name="Inamoto S."/>
            <person name="Hara Y."/>
            <person name="Nagase T."/>
            <person name="Ohara O."/>
            <person name="Koga H."/>
        </authorList>
    </citation>
    <scope>NUCLEOTIDE SEQUENCE [LARGE SCALE MRNA] OF 70-1200</scope>
    <source>
        <tissue>Brain</tissue>
    </source>
</reference>
<reference key="4">
    <citation type="journal article" date="2006" name="Mol. Cell. Proteomics">
        <title>Comprehensive identification of phosphorylation sites in postsynaptic density preparations.</title>
        <authorList>
            <person name="Trinidad J.C."/>
            <person name="Specht C.G."/>
            <person name="Thalhammer A."/>
            <person name="Schoepfer R."/>
            <person name="Burlingame A.L."/>
        </authorList>
    </citation>
    <scope>IDENTIFICATION BY MASS SPECTROMETRY [LARGE SCALE ANALYSIS]</scope>
    <source>
        <tissue>Brain</tissue>
    </source>
</reference>
<reference key="5">
    <citation type="journal article" date="2010" name="Cell">
        <title>A tissue-specific atlas of mouse protein phosphorylation and expression.</title>
        <authorList>
            <person name="Huttlin E.L."/>
            <person name="Jedrychowski M.P."/>
            <person name="Elias J.E."/>
            <person name="Goswami T."/>
            <person name="Rad R."/>
            <person name="Beausoleil S.A."/>
            <person name="Villen J."/>
            <person name="Haas W."/>
            <person name="Sowa M.E."/>
            <person name="Gygi S.P."/>
        </authorList>
    </citation>
    <scope>PHOSPHORYLATION [LARGE SCALE ANALYSIS] AT SER-694; SER-705; SER-708; SER-865; SER-944 AND SER-1059</scope>
    <scope>IDENTIFICATION BY MASS SPECTROMETRY [LARGE SCALE ANALYSIS]</scope>
    <source>
        <tissue>Brain</tissue>
    </source>
</reference>
<reference key="6">
    <citation type="journal article" date="2012" name="J. Cell Biol.">
        <title>GPR158/179 regulate G protein signaling by controlling localization and activity of the RGS7 complexes.</title>
        <authorList>
            <person name="Orlandi C."/>
            <person name="Posokhova E."/>
            <person name="Masuho I."/>
            <person name="Ray T.A."/>
            <person name="Hasan N."/>
            <person name="Gregg R.G."/>
            <person name="Martemyanov K.A."/>
        </authorList>
    </citation>
    <scope>FUNCTION</scope>
    <scope>SUBCELLULAR LOCATION</scope>
    <scope>INTERACTION WITH RGS7</scope>
</reference>
<reference key="7">
    <citation type="journal article" date="2015" name="J. Biol. Chem.">
        <title>Orphan Receptor GPR158 Is an Allosteric Modulator of RGS7 Catalytic Activity with an Essential Role in Dictating Its Expression and Localization in the Brain.</title>
        <authorList>
            <person name="Orlandi C."/>
            <person name="Xie K."/>
            <person name="Masuho I."/>
            <person name="Fajardo-Serrano A."/>
            <person name="Lujan R."/>
            <person name="Martemyanov K.A."/>
        </authorList>
    </citation>
    <scope>FUNCTION</scope>
    <scope>SUBCELLULAR LOCATION</scope>
    <scope>INTERACTION WITH GNAO1 AND RGS7</scope>
</reference>
<reference key="8">
    <citation type="journal article" date="2017" name="J. Exp. Med.">
        <title>Gpr158 mediates osteocalcin's regulation of cognition.</title>
        <authorList>
            <person name="Khrimian L."/>
            <person name="Obri A."/>
            <person name="Ramos-Brossier M."/>
            <person name="Rousseaud A."/>
            <person name="Moriceau S."/>
            <person name="Nicot A.S."/>
            <person name="Mera P."/>
            <person name="Kosmidis S."/>
            <person name="Karnavas T."/>
            <person name="Saudou F."/>
            <person name="Gao X.B."/>
            <person name="Oury F."/>
            <person name="Kandel E."/>
            <person name="Karsenty G."/>
        </authorList>
    </citation>
    <scope>FUNCTION</scope>
</reference>
<reference key="9">
    <citation type="journal article" date="2018" name="Cell Rep.">
        <title>Transsynaptic binding of orphan receptor GPR179 to Dystroglycan-pikachurin complex is essential for the synaptic organization of photoreceptors.</title>
        <authorList>
            <person name="Orlandi C."/>
            <person name="Omori Y."/>
            <person name="Wang Y."/>
            <person name="Cao Y."/>
            <person name="Ueno A."/>
            <person name="Roux M.J."/>
            <person name="Condomitti G."/>
            <person name="de Wit J."/>
            <person name="Kanagawa M."/>
            <person name="Furukawa T."/>
            <person name="Martemyanov K.A."/>
        </authorList>
    </citation>
    <scope>INTERACTION WITH EGFLAM</scope>
</reference>
<reference key="10">
    <citation type="journal article" date="2018" name="Cell Rep.">
        <title>RbAp48 protein is a critical component of GPR158/OCN signaling and ameliorates age-related memory loss.</title>
        <authorList>
            <person name="Kosmidis S."/>
            <person name="Polyzos A."/>
            <person name="Harvey L."/>
            <person name="Youssef M."/>
            <person name="Denny C.A."/>
            <person name="Dranovsky A."/>
            <person name="Kandel E.R."/>
        </authorList>
    </citation>
    <scope>FUNCTION</scope>
    <scope>INDUCTION</scope>
</reference>
<reference key="11">
    <citation type="journal article" date="2018" name="Neuron">
        <title>An input-specific orphan receptor GPR158-HSPG interaction organizes hippocampal mossy fiber-CA3 synapses.</title>
        <authorList>
            <person name="Condomitti G."/>
            <person name="Wierda K.D."/>
            <person name="Schroeder A."/>
            <person name="Rubio S.E."/>
            <person name="Vennekens K.M."/>
            <person name="Orlandi C."/>
            <person name="Martemyanov K.A."/>
            <person name="Gounko N.V."/>
            <person name="Savas J.N."/>
            <person name="de Wit J."/>
        </authorList>
    </citation>
    <scope>FUNCTION</scope>
    <scope>SUBCELLULAR LOCATION</scope>
</reference>
<reference key="12">
    <citation type="journal article" date="2018" name="Elife">
        <title>Orphan receptor GPR158 controls stress-induced depression.</title>
        <authorList>
            <person name="Sutton L.P."/>
            <person name="Orlandi C."/>
            <person name="Song C."/>
            <person name="Oh W.C."/>
            <person name="Muntean B.S."/>
            <person name="Xie K."/>
            <person name="Filippini A."/>
            <person name="Xie X."/>
            <person name="Satterfield R."/>
            <person name="Yaeger J.D.W."/>
            <person name="Renner K.J."/>
            <person name="Young S.M. Jr."/>
            <person name="Xu B."/>
            <person name="Kwon H."/>
            <person name="Martemyanov K.A."/>
        </authorList>
    </citation>
    <scope>FUNCTION</scope>
    <scope>TISSUE SPECIFICITY</scope>
    <scope>INDUCTION</scope>
    <scope>DISRUPTION PHENOTYPE</scope>
</reference>
<reference key="13">
    <citation type="journal article" date="2019" name="Front. Cell. Neurosci.">
        <title>Gpr158 deficiency impacts hippocampal CA1 neuronal excitability, dendritic architecture, and affects spatial learning.</title>
        <authorList>
            <person name="Cetereisi D."/>
            <person name="Kramvis I."/>
            <person name="Gebuis T."/>
            <person name="van der Loo R.J."/>
            <person name="Gouwenberg Y."/>
            <person name="Mansvelder H.D."/>
            <person name="Li K.W."/>
            <person name="Smit A.B."/>
            <person name="Spijker S."/>
        </authorList>
    </citation>
    <scope>FUNCTION</scope>
    <scope>DISRUPTION PHENOTYPE</scope>
</reference>
<reference key="14">
    <citation type="journal article" date="2019" name="J. Biol. Chem.">
        <title>The signaling proteins GPR158 and RGS7 modulate excitability of L2/3 pyramidal neurons and control A-type potassium channel in the prelimbic cortex.</title>
        <authorList>
            <person name="Song C."/>
            <person name="Orlandi C."/>
            <person name="Sutton L.P."/>
            <person name="Martemyanov K.A."/>
        </authorList>
    </citation>
    <scope>FUNCTION</scope>
    <scope>INTERACTION WITH THE RGS7-GNB5 COMPLEX</scope>
</reference>
<reference key="15">
    <citation type="journal article" date="2019" name="J. Ocul. Pharmacol. Ther.">
        <title>GPR158 in the visual system: homeostatic role in regulation of intraocular pressure.</title>
        <authorList>
            <person name="Itakura T."/>
            <person name="Webster A."/>
            <person name="Chintala S.K."/>
            <person name="Wang Y."/>
            <person name="Gonzalez J.M. Jr."/>
            <person name="Tan J.C."/>
            <person name="Vranka J.A."/>
            <person name="Acott T."/>
            <person name="Craft C.M."/>
            <person name="Sibug Saber M.E."/>
            <person name="Jeong S."/>
            <person name="Stamer W.D."/>
            <person name="Martemyanov K.A."/>
            <person name="Fini M.E."/>
        </authorList>
    </citation>
    <scope>TISSUE SPECIFICITY</scope>
    <scope>DISRUPTION PHENOTYPE</scope>
</reference>
<reference key="16">
    <citation type="journal article" date="2019" name="Neuropsychopharmacology">
        <title>Homeostatic cAMP regulation by the RGS7 complex controls depression-related behaviors.</title>
        <authorList>
            <person name="Orlandi C."/>
            <person name="Sutton L.P."/>
            <person name="Muntean B.S."/>
            <person name="Song C."/>
            <person name="Martemyanov K.A."/>
        </authorList>
    </citation>
    <scope>FUNCTION</scope>
    <scope>SUBCELLULAR LOCATION</scope>
</reference>
<reference key="17">
    <citation type="journal article" date="2023" name="Biomolecules">
        <title>Expression mapping and functional analysis of orphan G-protein-coupled receptor GPR158 in the adult mouse brain using a GPR158 transgenic mouse.</title>
        <authorList>
            <person name="Chang J."/>
            <person name="Song Z."/>
            <person name="Wei S."/>
            <person name="Zhou Y."/>
            <person name="Ju J."/>
            <person name="Yao P."/>
            <person name="Jiang Y."/>
            <person name="Jin H."/>
            <person name="Chi X."/>
            <person name="Li N."/>
        </authorList>
    </citation>
    <scope>SUBCELLULAR LOCATION</scope>
    <scope>TISSUE SPECIFICITY</scope>
</reference>
<reference key="18">
    <citation type="journal article" date="2023" name="Brain Res.">
        <title>Hyperglycemic microenvironment compromises the homeostasis of communication between the bone-brain axis by the epigenetic repression of the osteocalcin receptor, Gpr158 in the hippocampus.</title>
        <authorList>
            <person name="Patricia da Silva E."/>
            <person name="da Silva Feltran G."/>
            <person name="Alexandre Alcantara Dos Santos S."/>
            <person name="Cardoso de Oliveira R."/>
            <person name="Assis R.I.F."/>
            <person name="Antonio Justulin Junior L."/>
            <person name="Carleto Andia D."/>
            <person name="Zambuzzi W.F."/>
            <person name="Latini A."/>
            <person name="Foganholi da Silva R.A."/>
        </authorList>
    </citation>
    <scope>INDUCTION</scope>
</reference>
<reference key="19">
    <citation type="journal article" date="2023" name="Science">
        <title>Orphan receptor GPR158 serves as a metabotropic glycine receptor: mGlyR.</title>
        <authorList>
            <person name="Laboute T."/>
            <person name="Zucca S."/>
            <person name="Holcomb M."/>
            <person name="Patil D.N."/>
            <person name="Garza C."/>
            <person name="Wheatley B.A."/>
            <person name="Roy R.N."/>
            <person name="Forli S."/>
            <person name="Martemyanov K.A."/>
        </authorList>
    </citation>
    <scope>FUNCTION</scope>
</reference>
<accession>Q8C419</accession>
<accession>B1AWY4</accession>
<accession>Q8CHB0</accession>
<name>MGLYR_MOUSE</name>
<proteinExistence type="evidence at protein level"/>
<gene>
    <name evidence="22" type="primary">Gpr158</name>
    <name evidence="19" type="synonym">Kiaa1136</name>
</gene>
<feature type="signal peptide" evidence="3">
    <location>
        <begin position="1"/>
        <end position="24"/>
    </location>
</feature>
<feature type="chain" id="PRO_0000012970" description="Metabotropic glycine receptor">
    <location>
        <begin position="25"/>
        <end position="1200"/>
    </location>
</feature>
<feature type="topological domain" description="Extracellular" evidence="2">
    <location>
        <begin position="25"/>
        <end position="417"/>
    </location>
</feature>
<feature type="transmembrane region" description="Helical; Name=1" evidence="2">
    <location>
        <begin position="418"/>
        <end position="439"/>
    </location>
</feature>
<feature type="topological domain" description="Cytoplasmic" evidence="2">
    <location>
        <begin position="440"/>
        <end position="451"/>
    </location>
</feature>
<feature type="transmembrane region" description="Helical; Name=2" evidence="2">
    <location>
        <begin position="452"/>
        <end position="474"/>
    </location>
</feature>
<feature type="topological domain" description="Extracellular" evidence="2">
    <location>
        <begin position="475"/>
        <end position="478"/>
    </location>
</feature>
<feature type="transmembrane region" description="Helical; Name=3" evidence="2">
    <location>
        <begin position="479"/>
        <end position="501"/>
    </location>
</feature>
<feature type="topological domain" description="Cytoplasmic" evidence="2">
    <location>
        <begin position="502"/>
        <end position="525"/>
    </location>
</feature>
<feature type="transmembrane region" description="Helical; Name=4" evidence="2">
    <location>
        <begin position="526"/>
        <end position="547"/>
    </location>
</feature>
<feature type="topological domain" description="Extracellular" evidence="2">
    <location>
        <begin position="548"/>
        <end position="576"/>
    </location>
</feature>
<feature type="transmembrane region" description="Helical; Name=5" evidence="2">
    <location>
        <begin position="577"/>
        <end position="597"/>
    </location>
</feature>
<feature type="topological domain" description="Cytoplasmic" evidence="2">
    <location>
        <begin position="598"/>
        <end position="611"/>
    </location>
</feature>
<feature type="transmembrane region" description="Helical; Name=6" evidence="2">
    <location>
        <begin position="612"/>
        <end position="633"/>
    </location>
</feature>
<feature type="topological domain" description="Extracellular" evidence="2">
    <location>
        <begin position="634"/>
        <end position="642"/>
    </location>
</feature>
<feature type="transmembrane region" description="Helical; Name=7" evidence="2">
    <location>
        <begin position="643"/>
        <end position="664"/>
    </location>
</feature>
<feature type="topological domain" description="Cytoplasmic" evidence="2">
    <location>
        <begin position="665"/>
        <end position="1200"/>
    </location>
</feature>
<feature type="region of interest" description="Disordered" evidence="4">
    <location>
        <begin position="25"/>
        <end position="62"/>
    </location>
</feature>
<feature type="region of interest" description="Cache-like region" evidence="2">
    <location>
        <begin position="85"/>
        <end position="281"/>
    </location>
</feature>
<feature type="region of interest" description="Disordered" evidence="4">
    <location>
        <begin position="234"/>
        <end position="253"/>
    </location>
</feature>
<feature type="region of interest" description="Disordered" evidence="4">
    <location>
        <begin position="757"/>
        <end position="875"/>
    </location>
</feature>
<feature type="region of interest" description="Disordered" evidence="4">
    <location>
        <begin position="947"/>
        <end position="988"/>
    </location>
</feature>
<feature type="region of interest" description="Disordered" evidence="4">
    <location>
        <begin position="1130"/>
        <end position="1160"/>
    </location>
</feature>
<feature type="region of interest" description="Disordered" evidence="4">
    <location>
        <begin position="1177"/>
        <end position="1200"/>
    </location>
</feature>
<feature type="short sequence motif" description="VCPWE motif 1" evidence="2">
    <location>
        <begin position="1000"/>
        <end position="1004"/>
    </location>
</feature>
<feature type="short sequence motif" description="VCPWE motif 2" evidence="2">
    <location>
        <begin position="1065"/>
        <end position="1069"/>
    </location>
</feature>
<feature type="short sequence motif" description="VCPWE motif 3" evidence="2">
    <location>
        <begin position="1165"/>
        <end position="1169"/>
    </location>
</feature>
<feature type="compositionally biased region" description="Basic and acidic residues" evidence="4">
    <location>
        <begin position="769"/>
        <end position="781"/>
    </location>
</feature>
<feature type="compositionally biased region" description="Basic and acidic residues" evidence="4">
    <location>
        <begin position="819"/>
        <end position="828"/>
    </location>
</feature>
<feature type="compositionally biased region" description="Low complexity" evidence="4">
    <location>
        <begin position="845"/>
        <end position="856"/>
    </location>
</feature>
<feature type="compositionally biased region" description="Polar residues" evidence="4">
    <location>
        <begin position="973"/>
        <end position="988"/>
    </location>
</feature>
<feature type="compositionally biased region" description="Polar residues" evidence="4">
    <location>
        <begin position="1178"/>
        <end position="1191"/>
    </location>
</feature>
<feature type="binding site" evidence="2">
    <location>
        <position position="172"/>
    </location>
    <ligand>
        <name>glycine</name>
        <dbReference type="ChEBI" id="CHEBI:57305"/>
    </ligand>
</feature>
<feature type="binding site" evidence="2">
    <location>
        <position position="173"/>
    </location>
    <ligand>
        <name>glycine</name>
        <dbReference type="ChEBI" id="CHEBI:57305"/>
    </ligand>
</feature>
<feature type="binding site" evidence="2">
    <location>
        <position position="271"/>
    </location>
    <ligand>
        <name>glycine</name>
        <dbReference type="ChEBI" id="CHEBI:57305"/>
    </ligand>
</feature>
<feature type="binding site" evidence="2">
    <location>
        <position position="307"/>
    </location>
    <ligand>
        <name>glycine</name>
        <dbReference type="ChEBI" id="CHEBI:57305"/>
    </ligand>
</feature>
<feature type="modified residue" description="Phosphoserine" evidence="23">
    <location>
        <position position="694"/>
    </location>
</feature>
<feature type="modified residue" description="Phosphoserine" evidence="23">
    <location>
        <position position="705"/>
    </location>
</feature>
<feature type="modified residue" description="Phosphoserine" evidence="23">
    <location>
        <position position="708"/>
    </location>
</feature>
<feature type="modified residue" description="Phosphoserine" evidence="23">
    <location>
        <position position="865"/>
    </location>
</feature>
<feature type="modified residue" description="Phosphoserine" evidence="23">
    <location>
        <position position="944"/>
    </location>
</feature>
<feature type="modified residue" description="Phosphoserine" evidence="23">
    <location>
        <position position="1059"/>
    </location>
</feature>
<feature type="modified residue" description="Phosphoserine" evidence="1">
    <location>
        <position position="1074"/>
    </location>
</feature>
<feature type="glycosylation site" description="N-linked (GlcNAc...) asparagine" evidence="3">
    <location>
        <position position="98"/>
    </location>
</feature>
<feature type="glycosylation site" description="N-linked (GlcNAc...) asparagine" evidence="3">
    <location>
        <position position="143"/>
    </location>
</feature>
<feature type="glycosylation site" description="N-linked (GlcNAc...) asparagine" evidence="3">
    <location>
        <position position="215"/>
    </location>
</feature>
<feature type="glycosylation site" description="N-linked (GlcNAc...) asparagine" evidence="3">
    <location>
        <position position="274"/>
    </location>
</feature>
<feature type="glycosylation site" description="N-linked (GlcNAc...) asparagine" evidence="3">
    <location>
        <position position="333"/>
    </location>
</feature>
<feature type="disulfide bond" evidence="2">
    <location>
        <begin position="99"/>
        <end position="272"/>
    </location>
</feature>
<feature type="disulfide bond" evidence="2">
    <location>
        <begin position="481"/>
        <end position="573"/>
    </location>
</feature>
<feature type="cross-link" description="Glycyl lysine isopeptide (Lys-Gly) (interchain with G-Cter in ubiquitin)" evidence="2">
    <location>
        <position position="774"/>
    </location>
</feature>
<organism>
    <name type="scientific">Mus musculus</name>
    <name type="common">Mouse</name>
    <dbReference type="NCBI Taxonomy" id="10090"/>
    <lineage>
        <taxon>Eukaryota</taxon>
        <taxon>Metazoa</taxon>
        <taxon>Chordata</taxon>
        <taxon>Craniata</taxon>
        <taxon>Vertebrata</taxon>
        <taxon>Euteleostomi</taxon>
        <taxon>Mammalia</taxon>
        <taxon>Eutheria</taxon>
        <taxon>Euarchontoglires</taxon>
        <taxon>Glires</taxon>
        <taxon>Rodentia</taxon>
        <taxon>Myomorpha</taxon>
        <taxon>Muroidea</taxon>
        <taxon>Muridae</taxon>
        <taxon>Murinae</taxon>
        <taxon>Mus</taxon>
        <taxon>Mus</taxon>
    </lineage>
</organism>
<comment type="function">
    <text evidence="2 5 6 7 8 10 11 12 14 15 18">Metabotropic receptor for glycine that controls synapse formation and function in the brain (PubMed:29419376, PubMed:31311860, PubMed:31749686, PubMed:36996198). Acts as an atypical G-protein coupled receptor that recruits and regulates the RGS7-GNB5 complex instead of activating G proteins (PubMed:22689652, PubMed:25792749, PubMed:30546127, PubMed:31311860). In absence of glycine ligand, promotes the GTPase activator activity of RGS7, increasing the GTPase activity of G protein alpha subunits, thereby driving them into their inactive GDP-bound form (By similarity). Glycine-binding changes the conformation of the intracellular surface, inhibiting the GTPase activator activity of the RGS7-GNB5 complex, promoting G protein alpha subunits into their active GTP-bound form and regulating cAMP levels (By similarity). Also able to bind taurine, a compound closely related to glycine, but with a two-fold lower affinity (By similarity). Glycine receptor-dependent regulation of cAMP controls key ion channels, kinases and neurotrophic factors involved in neuronal excitability and synaptic transmission (PubMed:31311860, PubMed:36996198). Plays a pivotal role in regulating mood and cognition via its ability to regulate neuronal excitability in L2/L3 pyramidal neurons of the prefrontal cortex (PubMed:28851741, PubMed:29419376, PubMed:30546127, PubMed:31311860, PubMed:31749686). Also involved in spatial learning by regulating hippocampal CA1 neuronal excitability (PubMed:31749686). Acts as a synaptic organizer in the hippocampus, required for proper mossy fiber-CA3 neurocircuitry establishment, structure and function: induces presynaptic differentiation in contacting axons via its interaction with GPC4 (PubMed:30290982). In addition to glycine, may also act as a receptor for osteocalcin (Bglap or Bglap2) hormone: osteocalcin-binding initiates a signaling response that prevents neuronal apoptosis in the hippocampus and regulates the synthesis of neurotransmitters (PubMed:28851741, PubMed:30355501).</text>
</comment>
<comment type="subunit">
    <text evidence="1 2 5 6 9 14">Homodimer (By similarity). Associates with the RGS7-GNB5 complex, promoting its localization to the cell membrane and regulating its GTPase activator activity (PubMed:22689652, PubMed:25792749, PubMed:31311860). Interacts (via VCPWE motifs) with GNAO1 (PubMed:25792749). Interacts with GPC4 (By similarity). Interacts with EGFLAM (PubMed:30282023).</text>
</comment>
<comment type="interaction">
    <interactant intactId="EBI-776313">
        <id>Q8C419</id>
    </interactant>
    <interactant intactId="EBI-8307554">
        <id>P35052</id>
        <label>GPC1</label>
    </interactant>
    <organismsDiffer>true</organismsDiffer>
    <experiments>3</experiments>
</comment>
<comment type="interaction">
    <interactant intactId="EBI-776313">
        <id>Q8C419</id>
    </interactant>
    <interactant intactId="EBI-2558325">
        <id>P78333</id>
        <label>GPC5</label>
    </interactant>
    <organismsDiffer>true</organismsDiffer>
    <experiments>2</experiments>
</comment>
<comment type="interaction">
    <interactant intactId="EBI-776313">
        <id>Q8C419</id>
    </interactant>
    <interactant intactId="EBI-3913237">
        <id>P31431</id>
        <label>SDC4</label>
    </interactant>
    <organismsDiffer>true</organismsDiffer>
    <experiments>3</experiments>
</comment>
<comment type="subcellular location">
    <subcellularLocation>
        <location evidence="5 6 12">Cell membrane</location>
        <topology evidence="2">Multi-pass membrane protein</topology>
    </subcellularLocation>
    <subcellularLocation>
        <location evidence="10 17">Postsynaptic cell membrane</location>
        <topology evidence="2">Multi-pass membrane protein</topology>
    </subcellularLocation>
    <subcellularLocation>
        <location evidence="17">Presynaptic cell membrane</location>
        <topology evidence="2">Multi-pass membrane protein</topology>
    </subcellularLocation>
    <subcellularLocation>
        <location evidence="2">Nucleus</location>
    </subcellularLocation>
    <text evidence="2 17">Mainly localizes to the postsynaptic membrane, with a small portion to the presynaptic membrane (PubMed:36979415). Trafficks between the nucleus and the cell membrane; it is unclear how a multi-pass membrane protein can traffick between the nucleus and the cell membrane (By similarity).</text>
</comment>
<comment type="tissue specificity">
    <text evidence="8 13 17">Highly expressed in brain (PubMed:29419376, PubMed:36979415). Expressed in several brain regions including the cerebral cortex, hippocampus, cerebellum and caudate putamen (PubMed:36979415). Only expressed in neurons, and not in microglia, oligodendrocytes or astrocytes (PubMed:36979415). Expressed in the visual center of the cerebral cortex (PubMed:30855200). Also expressed in the eye, including photoreceptors, ganglion cells and trabecular meshwork (PubMed:30855200).</text>
</comment>
<comment type="induction">
    <text evidence="8 11 16">Expression in the dentate gyrus is regulated by RBBP4 (PubMed:30355501). Strongly up-regulated in the prefrontal cortex in response to stress (PubMed:29419376). Down-regulated in the hippocampus in response to hyperglycemia (PubMed:36634900).</text>
</comment>
<comment type="domain">
    <text evidence="2">The Cache-like region shares similarity with the Cache domain, a well-known receptor for amino acids (By similarity). It acts as a ligand-binding module that recognizes and binds glycine and taurine (By similarity).</text>
</comment>
<comment type="disruption phenotype">
    <text evidence="8 13 15">Mice show prominent antidepressant-like phenotype and stress resilience, characterized by attenuated response to stress-induced hyperthermia (PubMed:29419376). Mice also display defects in spatial learning and decreased acquisition of safety learning (PubMed:31749686). Mice show a short-term protection against the intraocular pressure increase that occurred with aging; however this protection is reversed over time (PubMed:30855200).</text>
</comment>
<comment type="similarity">
    <text evidence="21">Belongs to the G-protein coupled receptor 3 family.</text>
</comment>
<dbReference type="EMBL" id="AL772387">
    <property type="status" value="NOT_ANNOTATED_CDS"/>
    <property type="molecule type" value="Genomic_DNA"/>
</dbReference>
<dbReference type="EMBL" id="AL928939">
    <property type="status" value="NOT_ANNOTATED_CDS"/>
    <property type="molecule type" value="Genomic_DNA"/>
</dbReference>
<dbReference type="EMBL" id="AL929311">
    <property type="status" value="NOT_ANNOTATED_CDS"/>
    <property type="molecule type" value="Genomic_DNA"/>
</dbReference>
<dbReference type="EMBL" id="AK083234">
    <property type="protein sequence ID" value="BAC38819.1"/>
    <property type="molecule type" value="mRNA"/>
</dbReference>
<dbReference type="EMBL" id="AB093287">
    <property type="protein sequence ID" value="BAC41471.1"/>
    <property type="molecule type" value="mRNA"/>
</dbReference>
<dbReference type="CCDS" id="CCDS15722.1"/>
<dbReference type="RefSeq" id="NP_001004761.1">
    <property type="nucleotide sequence ID" value="NM_001004761.1"/>
</dbReference>
<dbReference type="SMR" id="Q8C419"/>
<dbReference type="BioGRID" id="232299">
    <property type="interactions" value="11"/>
</dbReference>
<dbReference type="FunCoup" id="Q8C419">
    <property type="interactions" value="1153"/>
</dbReference>
<dbReference type="IntAct" id="Q8C419">
    <property type="interactions" value="15"/>
</dbReference>
<dbReference type="MINT" id="Q8C419"/>
<dbReference type="STRING" id="10090.ENSMUSP00000049708"/>
<dbReference type="GlyConnect" id="2605">
    <property type="glycosylation" value="5 N-Linked glycans (3 sites)"/>
</dbReference>
<dbReference type="GlyCosmos" id="Q8C419">
    <property type="glycosylation" value="5 sites, 5 glycans"/>
</dbReference>
<dbReference type="GlyGen" id="Q8C419">
    <property type="glycosylation" value="8 sites, 11 N-linked glycans (6 sites), 1 O-linked glycan (1 site)"/>
</dbReference>
<dbReference type="iPTMnet" id="Q8C419"/>
<dbReference type="PhosphoSitePlus" id="Q8C419"/>
<dbReference type="SwissPalm" id="Q8C419"/>
<dbReference type="PaxDb" id="10090-ENSMUSP00000049708"/>
<dbReference type="PeptideAtlas" id="Q8C419"/>
<dbReference type="ProteomicsDB" id="271135"/>
<dbReference type="Antibodypedia" id="2922">
    <property type="antibodies" value="96 antibodies from 20 providers"/>
</dbReference>
<dbReference type="DNASU" id="241263"/>
<dbReference type="Ensembl" id="ENSMUST00000055946.8">
    <property type="protein sequence ID" value="ENSMUSP00000049708.8"/>
    <property type="gene ID" value="ENSMUSG00000045967.12"/>
</dbReference>
<dbReference type="GeneID" id="241263"/>
<dbReference type="KEGG" id="mmu:241263"/>
<dbReference type="UCSC" id="uc008ine.1">
    <property type="organism name" value="mouse"/>
</dbReference>
<dbReference type="AGR" id="MGI:2441697"/>
<dbReference type="CTD" id="57512"/>
<dbReference type="MGI" id="MGI:2441697">
    <property type="gene designation" value="Gpr158"/>
</dbReference>
<dbReference type="VEuPathDB" id="HostDB:ENSMUSG00000045967"/>
<dbReference type="eggNOG" id="KOG4418">
    <property type="taxonomic scope" value="Eukaryota"/>
</dbReference>
<dbReference type="GeneTree" id="ENSGT00940000155918"/>
<dbReference type="HOGENOM" id="CLU_006832_1_0_1"/>
<dbReference type="InParanoid" id="Q8C419"/>
<dbReference type="OMA" id="THVCLPC"/>
<dbReference type="OrthoDB" id="2129233at2759"/>
<dbReference type="PhylomeDB" id="Q8C419"/>
<dbReference type="TreeFam" id="TF319114"/>
<dbReference type="BioGRID-ORCS" id="241263">
    <property type="hits" value="0 hits in 75 CRISPR screens"/>
</dbReference>
<dbReference type="CD-CODE" id="CE726F99">
    <property type="entry name" value="Postsynaptic density"/>
</dbReference>
<dbReference type="ChiTaRS" id="Gpr158">
    <property type="organism name" value="mouse"/>
</dbReference>
<dbReference type="PRO" id="PR:Q8C419"/>
<dbReference type="Proteomes" id="UP000000589">
    <property type="component" value="Chromosome 2"/>
</dbReference>
<dbReference type="RNAct" id="Q8C419">
    <property type="molecule type" value="protein"/>
</dbReference>
<dbReference type="Bgee" id="ENSMUSG00000045967">
    <property type="expression patterns" value="Expressed in superior frontal gyrus and 74 other cell types or tissues"/>
</dbReference>
<dbReference type="GO" id="GO:0042995">
    <property type="term" value="C:cell projection"/>
    <property type="evidence" value="ECO:0007669"/>
    <property type="project" value="UniProtKB-KW"/>
</dbReference>
<dbReference type="GO" id="GO:0016020">
    <property type="term" value="C:membrane"/>
    <property type="evidence" value="ECO:0000314"/>
    <property type="project" value="MGI"/>
</dbReference>
<dbReference type="GO" id="GO:0005634">
    <property type="term" value="C:nucleus"/>
    <property type="evidence" value="ECO:0007669"/>
    <property type="project" value="UniProtKB-SubCell"/>
</dbReference>
<dbReference type="GO" id="GO:0005886">
    <property type="term" value="C:plasma membrane"/>
    <property type="evidence" value="ECO:0000314"/>
    <property type="project" value="UniProt"/>
</dbReference>
<dbReference type="GO" id="GO:0098839">
    <property type="term" value="C:postsynaptic density membrane"/>
    <property type="evidence" value="ECO:0000314"/>
    <property type="project" value="SynGO"/>
</dbReference>
<dbReference type="GO" id="GO:0045211">
    <property type="term" value="C:postsynaptic membrane"/>
    <property type="evidence" value="ECO:0000314"/>
    <property type="project" value="UniProtKB"/>
</dbReference>
<dbReference type="GO" id="GO:0042734">
    <property type="term" value="C:presynaptic membrane"/>
    <property type="evidence" value="ECO:0007669"/>
    <property type="project" value="UniProtKB-SubCell"/>
</dbReference>
<dbReference type="GO" id="GO:0008047">
    <property type="term" value="F:enzyme activator activity"/>
    <property type="evidence" value="ECO:0000314"/>
    <property type="project" value="UniProtKB"/>
</dbReference>
<dbReference type="GO" id="GO:0160079">
    <property type="term" value="F:G protein-coupled glycine receptor activity"/>
    <property type="evidence" value="ECO:0000250"/>
    <property type="project" value="UniProtKB"/>
</dbReference>
<dbReference type="GO" id="GO:0004888">
    <property type="term" value="F:transmembrane signaling receptor activity"/>
    <property type="evidence" value="ECO:0000314"/>
    <property type="project" value="UniProt"/>
</dbReference>
<dbReference type="GO" id="GO:0007420">
    <property type="term" value="P:brain development"/>
    <property type="evidence" value="ECO:0000314"/>
    <property type="project" value="UniProt"/>
</dbReference>
<dbReference type="GO" id="GO:0050890">
    <property type="term" value="P:cognition"/>
    <property type="evidence" value="ECO:0000314"/>
    <property type="project" value="UniProt"/>
</dbReference>
<dbReference type="GO" id="GO:0007186">
    <property type="term" value="P:G protein-coupled receptor signaling pathway"/>
    <property type="evidence" value="ECO:0000314"/>
    <property type="project" value="UniProtKB"/>
</dbReference>
<dbReference type="GO" id="GO:0001956">
    <property type="term" value="P:positive regulation of neurotransmitter secretion"/>
    <property type="evidence" value="ECO:0000314"/>
    <property type="project" value="UniProt"/>
</dbReference>
<dbReference type="GO" id="GO:0072659">
    <property type="term" value="P:protein localization to plasma membrane"/>
    <property type="evidence" value="ECO:0000314"/>
    <property type="project" value="UniProtKB"/>
</dbReference>
<dbReference type="GO" id="GO:0008277">
    <property type="term" value="P:regulation of G protein-coupled receptor signaling pathway"/>
    <property type="evidence" value="ECO:0000250"/>
    <property type="project" value="UniProtKB"/>
</dbReference>
<dbReference type="GO" id="GO:0050807">
    <property type="term" value="P:regulation of synapse organization"/>
    <property type="evidence" value="ECO:0000314"/>
    <property type="project" value="UniProtKB"/>
</dbReference>
<dbReference type="CDD" id="cd15293">
    <property type="entry name" value="7tmC_GPR158-like"/>
    <property type="match status" value="1"/>
</dbReference>
<dbReference type="Gene3D" id="3.30.450.20">
    <property type="entry name" value="PAS domain"/>
    <property type="match status" value="1"/>
</dbReference>
<dbReference type="InterPro" id="IPR017978">
    <property type="entry name" value="GPCR_3_C"/>
</dbReference>
<dbReference type="InterPro" id="IPR043458">
    <property type="entry name" value="GPR158/179"/>
</dbReference>
<dbReference type="InterPro" id="IPR054714">
    <property type="entry name" value="GPR158_179_extracellular"/>
</dbReference>
<dbReference type="PANTHER" id="PTHR32546">
    <property type="entry name" value="G-PROTEIN COUPLED RECEPTOR 158-RELATED"/>
    <property type="match status" value="1"/>
</dbReference>
<dbReference type="PANTHER" id="PTHR32546:SF11">
    <property type="entry name" value="G-PROTEIN COUPLED RECEPTOR 158-RELATED"/>
    <property type="match status" value="1"/>
</dbReference>
<dbReference type="Pfam" id="PF00003">
    <property type="entry name" value="7tm_3"/>
    <property type="match status" value="1"/>
</dbReference>
<dbReference type="Pfam" id="PF22572">
    <property type="entry name" value="GPR158_179_EC"/>
    <property type="match status" value="1"/>
</dbReference>
<dbReference type="PROSITE" id="PS50259">
    <property type="entry name" value="G_PROTEIN_RECEP_F3_4"/>
    <property type="match status" value="1"/>
</dbReference>
<evidence type="ECO:0000250" key="1">
    <source>
        <dbReference type="UniProtKB" id="D4A6L0"/>
    </source>
</evidence>
<evidence type="ECO:0000250" key="2">
    <source>
        <dbReference type="UniProtKB" id="Q5T848"/>
    </source>
</evidence>
<evidence type="ECO:0000255" key="3"/>
<evidence type="ECO:0000256" key="4">
    <source>
        <dbReference type="SAM" id="MobiDB-lite"/>
    </source>
</evidence>
<evidence type="ECO:0000269" key="5">
    <source>
    </source>
</evidence>
<evidence type="ECO:0000269" key="6">
    <source>
    </source>
</evidence>
<evidence type="ECO:0000269" key="7">
    <source>
    </source>
</evidence>
<evidence type="ECO:0000269" key="8">
    <source>
    </source>
</evidence>
<evidence type="ECO:0000269" key="9">
    <source>
    </source>
</evidence>
<evidence type="ECO:0000269" key="10">
    <source>
    </source>
</evidence>
<evidence type="ECO:0000269" key="11">
    <source>
    </source>
</evidence>
<evidence type="ECO:0000269" key="12">
    <source>
    </source>
</evidence>
<evidence type="ECO:0000269" key="13">
    <source>
    </source>
</evidence>
<evidence type="ECO:0000269" key="14">
    <source>
    </source>
</evidence>
<evidence type="ECO:0000269" key="15">
    <source>
    </source>
</evidence>
<evidence type="ECO:0000269" key="16">
    <source>
    </source>
</evidence>
<evidence type="ECO:0000269" key="17">
    <source>
    </source>
</evidence>
<evidence type="ECO:0000269" key="18">
    <source>
    </source>
</evidence>
<evidence type="ECO:0000303" key="19">
    <source>
    </source>
</evidence>
<evidence type="ECO:0000303" key="20">
    <source>
    </source>
</evidence>
<evidence type="ECO:0000305" key="21"/>
<evidence type="ECO:0000312" key="22">
    <source>
        <dbReference type="MGI" id="MGI:2441697"/>
    </source>
</evidence>
<evidence type="ECO:0007744" key="23">
    <source>
    </source>
</evidence>